<reference key="1">
    <citation type="submission" date="2005-06" db="EMBL/GenBank/DDBJ databases">
        <title>DNA sequences of macaque genes expressed in brain or testis and its evolutionary implications.</title>
        <authorList>
            <consortium name="International consortium for macaque cDNA sequencing and analysis"/>
        </authorList>
    </citation>
    <scope>NUCLEOTIDE SEQUENCE [LARGE SCALE MRNA]</scope>
    <source>
        <tissue>Brain cortex</tissue>
    </source>
</reference>
<gene>
    <name type="primary">AGPAT4</name>
    <name type="ORF">QccE-15256</name>
</gene>
<keyword id="KW-0012">Acyltransferase</keyword>
<keyword id="KW-0256">Endoplasmic reticulum</keyword>
<keyword id="KW-0444">Lipid biosynthesis</keyword>
<keyword id="KW-0443">Lipid metabolism</keyword>
<keyword id="KW-0472">Membrane</keyword>
<keyword id="KW-0594">Phospholipid biosynthesis</keyword>
<keyword id="KW-1208">Phospholipid metabolism</keyword>
<keyword id="KW-1185">Reference proteome</keyword>
<keyword id="KW-0808">Transferase</keyword>
<keyword id="KW-0812">Transmembrane</keyword>
<keyword id="KW-1133">Transmembrane helix</keyword>
<protein>
    <recommendedName>
        <fullName>1-acyl-sn-glycerol-3-phosphate acyltransferase delta</fullName>
        <ecNumber evidence="1">2.3.1.51</ecNumber>
    </recommendedName>
    <alternativeName>
        <fullName>1-acylglycerol-3-phosphate O-acyltransferase 4</fullName>
        <shortName>1-AGP acyltransferase 4</shortName>
        <shortName>1-AGPAT 4</shortName>
    </alternativeName>
    <alternativeName>
        <fullName>Lysophosphatidic acid acyltransferase delta</fullName>
        <shortName>LPAAT-delta</shortName>
    </alternativeName>
</protein>
<organism>
    <name type="scientific">Macaca fascicularis</name>
    <name type="common">Crab-eating macaque</name>
    <name type="synonym">Cynomolgus monkey</name>
    <dbReference type="NCBI Taxonomy" id="9541"/>
    <lineage>
        <taxon>Eukaryota</taxon>
        <taxon>Metazoa</taxon>
        <taxon>Chordata</taxon>
        <taxon>Craniata</taxon>
        <taxon>Vertebrata</taxon>
        <taxon>Euteleostomi</taxon>
        <taxon>Mammalia</taxon>
        <taxon>Eutheria</taxon>
        <taxon>Euarchontoglires</taxon>
        <taxon>Primates</taxon>
        <taxon>Haplorrhini</taxon>
        <taxon>Catarrhini</taxon>
        <taxon>Cercopithecidae</taxon>
        <taxon>Cercopithecinae</taxon>
        <taxon>Macaca</taxon>
    </lineage>
</organism>
<sequence>MDLAGLLKSQFLCHLVFCYVFIASGLIINTVQLFTLLLWPINKQLFRKINCRLSYCISSQLVMLLEWWSGTECTIFTDPRAYPKYGKENAIVVLNHKFEIDFLCGWSLSERFGLLGGSKVLAKKELAYVPIIGWMWYFTEMVFCSRKWEQDRKTVATSLQHLRDYPEKYFFLIHCEGTRFTEKKHEISMQVARAKGLPRLKHHPLPRTKGFAITVRSLRNVVSAVYDCTLNFRNNENPTLLGVLNGKKYHADLYVRRIPLEDIPEDDDRCSAWLHKLYQEKDAFQEEYYRTGTFPETPMVPPRRPWTLVNWLFWASLVLYPFFQFLVSMIRSGSSLTLASFILVFFVASMGVRWMIGVTEIDKGSAYGNSDSKQKQND</sequence>
<name>PLCD_MACFA</name>
<proteinExistence type="evidence at transcript level"/>
<evidence type="ECO:0000250" key="1">
    <source>
        <dbReference type="UniProtKB" id="Q8K4X7"/>
    </source>
</evidence>
<evidence type="ECO:0000250" key="2">
    <source>
        <dbReference type="UniProtKB" id="Q9D517"/>
    </source>
</evidence>
<evidence type="ECO:0000255" key="3"/>
<evidence type="ECO:0000305" key="4"/>
<accession>Q4R581</accession>
<comment type="function">
    <text evidence="1">Converts 1-acyl-sn-glycerol-3-phosphate (lysophosphatidic acid or LPA) into 1,2-diacyl-sn-glycerol-3-phosphate (phosphatidic acid or PA) by incorporating an acyl moiety at the sn-2 position of the glycerol backbone (By similarity). Exhibits high acyl-CoA specificity for polyunsaturated fatty acyl-CoA, especially docosahexaenoyl-CoA (22:6-CoA, DHA-CoA) (By similarity).</text>
</comment>
<comment type="catalytic activity">
    <reaction evidence="1">
        <text>a 1-acyl-sn-glycero-3-phosphate + an acyl-CoA = a 1,2-diacyl-sn-glycero-3-phosphate + CoA</text>
        <dbReference type="Rhea" id="RHEA:19709"/>
        <dbReference type="ChEBI" id="CHEBI:57287"/>
        <dbReference type="ChEBI" id="CHEBI:57970"/>
        <dbReference type="ChEBI" id="CHEBI:58342"/>
        <dbReference type="ChEBI" id="CHEBI:58608"/>
        <dbReference type="EC" id="2.3.1.51"/>
    </reaction>
    <physiologicalReaction direction="left-to-right" evidence="1">
        <dbReference type="Rhea" id="RHEA:19710"/>
    </physiologicalReaction>
</comment>
<comment type="catalytic activity">
    <reaction evidence="1">
        <text>(4Z,7Z,10Z,13Z,16Z,19Z)-docosahexaenoyl-CoA + 1-hexadecanoyl-sn-glycero-3-phosphate = 1-hexadecanoyl-2-(4Z,7Z,10Z,13Z,16Z,19Z-docosahexaenoyl)-sn-glycero-3-phosphate + CoA</text>
        <dbReference type="Rhea" id="RHEA:55300"/>
        <dbReference type="ChEBI" id="CHEBI:57287"/>
        <dbReference type="ChEBI" id="CHEBI:57518"/>
        <dbReference type="ChEBI" id="CHEBI:74298"/>
        <dbReference type="ChEBI" id="CHEBI:82928"/>
    </reaction>
    <physiologicalReaction direction="left-to-right" evidence="1">
        <dbReference type="Rhea" id="RHEA:55301"/>
    </physiologicalReaction>
</comment>
<comment type="catalytic activity">
    <reaction evidence="1">
        <text>1-octadecanoyl-sn-glycero-3-phosphate + (9Z,12Z)-octadecadienoyl-CoA = 1-octadecanoyl-2-(9Z,12Z-octadecadienoyl)-sn-glycero-3-phosphate + CoA</text>
        <dbReference type="Rhea" id="RHEA:55304"/>
        <dbReference type="ChEBI" id="CHEBI:57287"/>
        <dbReference type="ChEBI" id="CHEBI:57383"/>
        <dbReference type="ChEBI" id="CHEBI:74565"/>
        <dbReference type="ChEBI" id="CHEBI:77098"/>
    </reaction>
    <physiologicalReaction direction="left-to-right" evidence="1">
        <dbReference type="Rhea" id="RHEA:55305"/>
    </physiologicalReaction>
</comment>
<comment type="catalytic activity">
    <reaction evidence="1">
        <text>1-octadecanoyl-sn-glycero-3-phosphate + (4Z,7Z,10Z,13Z,16Z,19Z)-docosahexaenoyl-CoA = 1-octadecanoyl-2-(4Z,7Z,10Z,13Z,16Z,19Z-docosahexaenoyl)-sn-glycero-3-phosphate + CoA</text>
        <dbReference type="Rhea" id="RHEA:55308"/>
        <dbReference type="ChEBI" id="CHEBI:57287"/>
        <dbReference type="ChEBI" id="CHEBI:74298"/>
        <dbReference type="ChEBI" id="CHEBI:74565"/>
        <dbReference type="ChEBI" id="CHEBI:77130"/>
    </reaction>
    <physiologicalReaction direction="left-to-right" evidence="1">
        <dbReference type="Rhea" id="RHEA:55309"/>
    </physiologicalReaction>
</comment>
<comment type="catalytic activity">
    <reaction evidence="1">
        <text>(4Z,7Z,10Z,13Z,16Z,19Z)-docosahexaenoyl-CoA + 1-(9Z-octadecenoyl)-sn-glycero-3-phosphate = 1-(9Z-octadecenoyl)-2-(4Z,7Z,10Z,13Z,16Z,19Z-docosahexaenoyl)-sn-glycero-3-phosphate + CoA</text>
        <dbReference type="Rhea" id="RHEA:55312"/>
        <dbReference type="ChEBI" id="CHEBI:57287"/>
        <dbReference type="ChEBI" id="CHEBI:74298"/>
        <dbReference type="ChEBI" id="CHEBI:74544"/>
        <dbReference type="ChEBI" id="CHEBI:138723"/>
    </reaction>
    <physiologicalReaction direction="left-to-right" evidence="1">
        <dbReference type="Rhea" id="RHEA:55313"/>
    </physiologicalReaction>
</comment>
<comment type="pathway">
    <text>Phospholipid metabolism; CDP-diacylglycerol biosynthesis; CDP-diacylglycerol from sn-glycerol 3-phosphate: step 2/3.</text>
</comment>
<comment type="subcellular location">
    <subcellularLocation>
        <location evidence="1">Endoplasmic reticulum membrane</location>
        <topology evidence="3">Multi-pass membrane protein</topology>
    </subcellularLocation>
</comment>
<comment type="domain">
    <text evidence="2">The HXXXXD motif is essential for acyltransferase activity and may constitute the binding site for the phosphate moiety of the glycerol-3-phosphate.</text>
</comment>
<comment type="similarity">
    <text evidence="4">Belongs to the 1-acyl-sn-glycerol-3-phosphate acyltransferase family.</text>
</comment>
<dbReference type="EC" id="2.3.1.51" evidence="1"/>
<dbReference type="EMBL" id="AB169663">
    <property type="protein sequence ID" value="BAE01744.1"/>
    <property type="molecule type" value="mRNA"/>
</dbReference>
<dbReference type="RefSeq" id="NP_001270673.1">
    <property type="nucleotide sequence ID" value="NM_001283744.1"/>
</dbReference>
<dbReference type="STRING" id="9541.ENSMFAP00000029017"/>
<dbReference type="eggNOG" id="KOG1505">
    <property type="taxonomic scope" value="Eukaryota"/>
</dbReference>
<dbReference type="UniPathway" id="UPA00557">
    <property type="reaction ID" value="UER00613"/>
</dbReference>
<dbReference type="Proteomes" id="UP000233100">
    <property type="component" value="Unplaced"/>
</dbReference>
<dbReference type="GO" id="GO:0005783">
    <property type="term" value="C:endoplasmic reticulum"/>
    <property type="evidence" value="ECO:0000250"/>
    <property type="project" value="UniProtKB"/>
</dbReference>
<dbReference type="GO" id="GO:0005789">
    <property type="term" value="C:endoplasmic reticulum membrane"/>
    <property type="evidence" value="ECO:0007669"/>
    <property type="project" value="UniProtKB-SubCell"/>
</dbReference>
<dbReference type="GO" id="GO:0005741">
    <property type="term" value="C:mitochondrial outer membrane"/>
    <property type="evidence" value="ECO:0007669"/>
    <property type="project" value="TreeGrafter"/>
</dbReference>
<dbReference type="GO" id="GO:0003841">
    <property type="term" value="F:1-acylglycerol-3-phosphate O-acyltransferase activity"/>
    <property type="evidence" value="ECO:0000250"/>
    <property type="project" value="UniProtKB"/>
</dbReference>
<dbReference type="GO" id="GO:0016024">
    <property type="term" value="P:CDP-diacylglycerol biosynthetic process"/>
    <property type="evidence" value="ECO:0007669"/>
    <property type="project" value="UniProtKB-UniPathway"/>
</dbReference>
<dbReference type="CDD" id="cd07990">
    <property type="entry name" value="LPLAT_LCLAT1-like"/>
    <property type="match status" value="1"/>
</dbReference>
<dbReference type="InterPro" id="IPR032098">
    <property type="entry name" value="Acyltransf_C"/>
</dbReference>
<dbReference type="InterPro" id="IPR002123">
    <property type="entry name" value="Plipid/glycerol_acylTrfase"/>
</dbReference>
<dbReference type="PANTHER" id="PTHR10983:SF8">
    <property type="entry name" value="1-ACYL-SN-GLYCEROL-3-PHOSPHATE ACYLTRANSFERASE DELTA"/>
    <property type="match status" value="1"/>
</dbReference>
<dbReference type="PANTHER" id="PTHR10983">
    <property type="entry name" value="1-ACYLGLYCEROL-3-PHOSPHATE ACYLTRANSFERASE-RELATED"/>
    <property type="match status" value="1"/>
</dbReference>
<dbReference type="Pfam" id="PF16076">
    <property type="entry name" value="Acyltransf_C"/>
    <property type="match status" value="1"/>
</dbReference>
<dbReference type="Pfam" id="PF01553">
    <property type="entry name" value="Acyltransferase"/>
    <property type="match status" value="1"/>
</dbReference>
<dbReference type="SMART" id="SM00563">
    <property type="entry name" value="PlsC"/>
    <property type="match status" value="1"/>
</dbReference>
<dbReference type="SUPFAM" id="SSF69593">
    <property type="entry name" value="Glycerol-3-phosphate (1)-acyltransferase"/>
    <property type="match status" value="1"/>
</dbReference>
<feature type="chain" id="PRO_0000293477" description="1-acyl-sn-glycerol-3-phosphate acyltransferase delta">
    <location>
        <begin position="1"/>
        <end position="378"/>
    </location>
</feature>
<feature type="transmembrane region" description="Helical" evidence="3">
    <location>
        <begin position="11"/>
        <end position="31"/>
    </location>
</feature>
<feature type="transmembrane region" description="Helical" evidence="3">
    <location>
        <begin position="125"/>
        <end position="145"/>
    </location>
</feature>
<feature type="transmembrane region" description="Helical" evidence="3">
    <location>
        <begin position="307"/>
        <end position="327"/>
    </location>
</feature>
<feature type="transmembrane region" description="Helical" evidence="3">
    <location>
        <begin position="338"/>
        <end position="358"/>
    </location>
</feature>
<feature type="short sequence motif" description="HXXXXD motif" evidence="2">
    <location>
        <begin position="96"/>
        <end position="101"/>
    </location>
</feature>